<comment type="function">
    <text>Major protein of the aragonitic otoconia. It is unlikely that this protein has phospholipase A2 activity.</text>
</comment>
<comment type="subunit">
    <text evidence="2">Monomer.</text>
</comment>
<comment type="subcellular location">
    <subcellularLocation>
        <location evidence="1">Secreted</location>
    </subcellularLocation>
</comment>
<comment type="tissue specificity">
    <text>Otoconial membrane in the maculae of the saccule and utricle. Otoconia are composites of proteins and inorganic crystals formed in the peripheral portion of the vestibular system of vertebrates. The otoconial membranes contain small crystals of calcium carbonate known as otoliths (ear stones) if there is a single deposit or as otoconia (ear dust) if there are many. Each mineral polymorph of otoconia has a protein unique to that polymorph.</text>
</comment>
<comment type="similarity">
    <text evidence="2">Belongs to the phospholipase A2 family.</text>
</comment>
<feature type="chain" id="PRO_0000161726" description="Phospholipase A2 homolog otoconin-22">
    <location>
        <begin position="1"/>
        <end position="127"/>
    </location>
</feature>
<feature type="glycosylation site" description="N-linked (GlcNAc...) asparagine">
    <location>
        <position position="20"/>
    </location>
</feature>
<feature type="glycosylation site" description="N-linked (GlcNAc...) asparagine">
    <location>
        <position position="113"/>
    </location>
</feature>
<feature type="disulfide bond" evidence="1">
    <location>
        <begin position="26"/>
        <end position="120"/>
    </location>
</feature>
<feature type="disulfide bond" evidence="1">
    <location>
        <begin position="28"/>
        <end position="44"/>
    </location>
</feature>
<feature type="disulfide bond" evidence="1">
    <location>
        <begin position="43"/>
        <end position="99"/>
    </location>
</feature>
<feature type="disulfide bond" evidence="1">
    <location>
        <begin position="49"/>
        <end position="127"/>
    </location>
</feature>
<feature type="disulfide bond" evidence="1">
    <location>
        <begin position="50"/>
        <end position="92"/>
    </location>
</feature>
<feature type="disulfide bond" evidence="1">
    <location>
        <begin position="59"/>
        <end position="85"/>
    </location>
</feature>
<feature type="disulfide bond" evidence="1">
    <location>
        <begin position="78"/>
        <end position="90"/>
    </location>
</feature>
<keyword id="KW-0903">Direct protein sequencing</keyword>
<keyword id="KW-1015">Disulfide bond</keyword>
<keyword id="KW-0325">Glycoprotein</keyword>
<keyword id="KW-1185">Reference proteome</keyword>
<keyword id="KW-0964">Secreted</keyword>
<name>PA2H_XENLA</name>
<reference key="1">
    <citation type="journal article" date="1993" name="Biochemistry">
        <title>Otoconin-22, the major protein of aragonitic frog otoconia, is a homolog of phospholipase A2.</title>
        <authorList>
            <person name="Pote K.G."/>
            <person name="Hauer C.R. III"/>
            <person name="Michel H."/>
            <person name="Shabanowitz J."/>
            <person name="Hunt D.F."/>
            <person name="Kretsinger R.H."/>
        </authorList>
    </citation>
    <scope>PROTEIN SEQUENCE</scope>
</reference>
<accession>P41485</accession>
<sequence length="127" mass="14631">TPAQFDEMIKVTTIIYGLANFSDYGCHCGLNNQGMPVDDIDWCCHSQDCCYNKAEMSGCNPVTQTYRFYVEEQKKVECMKASNRCEKMICECDEKAANCFRKELEDYNIYFRNFSSLGACRGPRPFC</sequence>
<evidence type="ECO:0000250" key="1"/>
<evidence type="ECO:0000305" key="2"/>
<proteinExistence type="evidence at protein level"/>
<organism>
    <name type="scientific">Xenopus laevis</name>
    <name type="common">African clawed frog</name>
    <dbReference type="NCBI Taxonomy" id="8355"/>
    <lineage>
        <taxon>Eukaryota</taxon>
        <taxon>Metazoa</taxon>
        <taxon>Chordata</taxon>
        <taxon>Craniata</taxon>
        <taxon>Vertebrata</taxon>
        <taxon>Euteleostomi</taxon>
        <taxon>Amphibia</taxon>
        <taxon>Batrachia</taxon>
        <taxon>Anura</taxon>
        <taxon>Pipoidea</taxon>
        <taxon>Pipidae</taxon>
        <taxon>Xenopodinae</taxon>
        <taxon>Xenopus</taxon>
        <taxon>Xenopus</taxon>
    </lineage>
</organism>
<dbReference type="PIR" id="A49269">
    <property type="entry name" value="A49269"/>
</dbReference>
<dbReference type="SMR" id="P41485"/>
<dbReference type="Proteomes" id="UP000186698">
    <property type="component" value="Unplaced"/>
</dbReference>
<dbReference type="GO" id="GO:0005576">
    <property type="term" value="C:extracellular region"/>
    <property type="evidence" value="ECO:0007669"/>
    <property type="project" value="UniProtKB-SubCell"/>
</dbReference>
<dbReference type="GO" id="GO:0005509">
    <property type="term" value="F:calcium ion binding"/>
    <property type="evidence" value="ECO:0000318"/>
    <property type="project" value="GO_Central"/>
</dbReference>
<dbReference type="GO" id="GO:0047498">
    <property type="term" value="F:calcium-dependent phospholipase A2 activity"/>
    <property type="evidence" value="ECO:0000318"/>
    <property type="project" value="GO_Central"/>
</dbReference>
<dbReference type="GO" id="GO:0005543">
    <property type="term" value="F:phospholipid binding"/>
    <property type="evidence" value="ECO:0000318"/>
    <property type="project" value="GO_Central"/>
</dbReference>
<dbReference type="GO" id="GO:0050482">
    <property type="term" value="P:arachidonate secretion"/>
    <property type="evidence" value="ECO:0007669"/>
    <property type="project" value="InterPro"/>
</dbReference>
<dbReference type="GO" id="GO:0016042">
    <property type="term" value="P:lipid catabolic process"/>
    <property type="evidence" value="ECO:0007669"/>
    <property type="project" value="InterPro"/>
</dbReference>
<dbReference type="GO" id="GO:0046470">
    <property type="term" value="P:phosphatidylcholine metabolic process"/>
    <property type="evidence" value="ECO:0000318"/>
    <property type="project" value="GO_Central"/>
</dbReference>
<dbReference type="GO" id="GO:0046471">
    <property type="term" value="P:phosphatidylglycerol metabolic process"/>
    <property type="evidence" value="ECO:0000318"/>
    <property type="project" value="GO_Central"/>
</dbReference>
<dbReference type="CDD" id="cd00125">
    <property type="entry name" value="PLA2c"/>
    <property type="match status" value="1"/>
</dbReference>
<dbReference type="FunFam" id="1.20.90.10:FF:000001">
    <property type="entry name" value="Basic phospholipase A2 homolog"/>
    <property type="match status" value="1"/>
</dbReference>
<dbReference type="Gene3D" id="1.20.90.10">
    <property type="entry name" value="Phospholipase A2 domain"/>
    <property type="match status" value="1"/>
</dbReference>
<dbReference type="InterPro" id="IPR001211">
    <property type="entry name" value="PLipase_A2"/>
</dbReference>
<dbReference type="InterPro" id="IPR033112">
    <property type="entry name" value="PLipase_A2_Asp_AS"/>
</dbReference>
<dbReference type="InterPro" id="IPR016090">
    <property type="entry name" value="PLipase_A2_dom"/>
</dbReference>
<dbReference type="InterPro" id="IPR036444">
    <property type="entry name" value="PLipase_A2_dom_sf"/>
</dbReference>
<dbReference type="PANTHER" id="PTHR11716">
    <property type="entry name" value="PHOSPHOLIPASE A2 FAMILY MEMBER"/>
    <property type="match status" value="1"/>
</dbReference>
<dbReference type="PANTHER" id="PTHR11716:SF6">
    <property type="entry name" value="PHOSPHOLIPASE A2 HOMOLOG OTOCONIN-22"/>
    <property type="match status" value="1"/>
</dbReference>
<dbReference type="Pfam" id="PF00068">
    <property type="entry name" value="Phospholip_A2_1"/>
    <property type="match status" value="1"/>
</dbReference>
<dbReference type="PRINTS" id="PR00389">
    <property type="entry name" value="PHPHLIPASEA2"/>
</dbReference>
<dbReference type="SMART" id="SM00085">
    <property type="entry name" value="PA2c"/>
    <property type="match status" value="1"/>
</dbReference>
<dbReference type="SUPFAM" id="SSF48619">
    <property type="entry name" value="Phospholipase A2, PLA2"/>
    <property type="match status" value="1"/>
</dbReference>
<dbReference type="PROSITE" id="PS00119">
    <property type="entry name" value="PA2_ASP"/>
    <property type="match status" value="1"/>
</dbReference>
<protein>
    <recommendedName>
        <fullName>Phospholipase A2 homolog otoconin-22</fullName>
        <shortName>Oc22</shortName>
    </recommendedName>
</protein>